<sequence length="12" mass="1209">ATPFGGSSYEGH</sequence>
<comment type="function">
    <text>Anticoagulant protein. May prevent the complex of factors Xa (F10) and factor Va (F5) from binding to phospholipid surfaces and to prothrombin (F2). Also blocks the activation of factor X (F10) by factor VIIa (F7) and tissue factor (F3) as well.</text>
</comment>
<comment type="subcellular location">
    <subcellularLocation>
        <location>Secreted</location>
    </subcellularLocation>
</comment>
<comment type="tissue specificity">
    <text>Expressed by the venom gland.</text>
</comment>
<reference key="1">
    <citation type="journal article" date="1993" name="Toxicon">
        <title>Coagulation factor X inhibitor from hundred-pace snake (Deinagkistrodon acutus) venom.</title>
        <authorList>
            <person name="Cox A.C."/>
        </authorList>
    </citation>
    <scope>PROTEIN SEQUENCE</scope>
    <source>
        <tissue>Venom</tissue>
    </source>
</reference>
<accession>Q7LZ26</accession>
<name>XI_DEIAC</name>
<organism>
    <name type="scientific">Deinagkistrodon acutus</name>
    <name type="common">Hundred-pace snake</name>
    <name type="synonym">Agkistrodon acutus</name>
    <dbReference type="NCBI Taxonomy" id="36307"/>
    <lineage>
        <taxon>Eukaryota</taxon>
        <taxon>Metazoa</taxon>
        <taxon>Chordata</taxon>
        <taxon>Craniata</taxon>
        <taxon>Vertebrata</taxon>
        <taxon>Euteleostomi</taxon>
        <taxon>Lepidosauria</taxon>
        <taxon>Squamata</taxon>
        <taxon>Bifurcata</taxon>
        <taxon>Unidentata</taxon>
        <taxon>Episquamata</taxon>
        <taxon>Toxicofera</taxon>
        <taxon>Serpentes</taxon>
        <taxon>Colubroidea</taxon>
        <taxon>Viperidae</taxon>
        <taxon>Crotalinae</taxon>
        <taxon>Deinagkistrodon</taxon>
    </lineage>
</organism>
<keyword id="KW-1203">Blood coagulation cascade inhibiting toxin</keyword>
<keyword id="KW-0903">Direct protein sequencing</keyword>
<keyword id="KW-1199">Hemostasis impairing toxin</keyword>
<keyword id="KW-0964">Secreted</keyword>
<keyword id="KW-0800">Toxin</keyword>
<dbReference type="PIR" id="A49261">
    <property type="entry name" value="A49261"/>
</dbReference>
<dbReference type="GO" id="GO:0005576">
    <property type="term" value="C:extracellular region"/>
    <property type="evidence" value="ECO:0007669"/>
    <property type="project" value="UniProtKB-SubCell"/>
</dbReference>
<dbReference type="GO" id="GO:0090729">
    <property type="term" value="F:toxin activity"/>
    <property type="evidence" value="ECO:0007669"/>
    <property type="project" value="UniProtKB-KW"/>
</dbReference>
<proteinExistence type="evidence at protein level"/>
<protein>
    <recommendedName>
        <fullName>Coagulation factor X inhibitor</fullName>
    </recommendedName>
</protein>
<feature type="chain" id="PRO_0000408519" description="Coagulation factor X inhibitor">
    <location>
        <begin position="1"/>
        <end position="12" status="greater than"/>
    </location>
</feature>
<feature type="non-terminal residue">
    <location>
        <position position="12"/>
    </location>
</feature>